<evidence type="ECO:0000250" key="1"/>
<evidence type="ECO:0000250" key="2">
    <source>
        <dbReference type="UniProtKB" id="Q96RK4"/>
    </source>
</evidence>
<evidence type="ECO:0000256" key="3">
    <source>
        <dbReference type="SAM" id="MobiDB-lite"/>
    </source>
</evidence>
<evidence type="ECO:0000269" key="4">
    <source>
    </source>
</evidence>
<evidence type="ECO:0000269" key="5">
    <source>
    </source>
</evidence>
<evidence type="ECO:0000305" key="6"/>
<evidence type="ECO:0000312" key="7">
    <source>
        <dbReference type="WormBase" id="F58A4.14a"/>
    </source>
</evidence>
<name>BBS4_CAEEL</name>
<comment type="function">
    <text evidence="2 4 5">Component of the BBSome complex (By similarity). The BBSome complex is thought to function as a coat complex required for sorting of specific membrane proteins to the primary cilia (By similarity). The BBSome complex is required for ciliogenesis but is dispensable for centriolar satellite function (By similarity). Required for proper BBSome complex assembly and its ciliary localization (By similarity). May be required for microtubule anchoring at the centrosome but not for microtubule nucleation (By similarity). May be required for the dynein-mediated transport of pericentriolar proteins to the centrosome (By similarity). Required, redundantly with bbs-5, for cilia biogenesis and both the assembly and movement of intraflagellar transport proteins along the ciliary axoneme (PubMed:22922713, PubMed:26150102). Plays a role in the removal of degraded mechanosensory receptors within the cilia (PubMed:26150102).</text>
</comment>
<comment type="subunit">
    <text evidence="2 5">Part of BBSome complex, that contains at least bbs-1, bbs-2, bbs-4, bbs-5, osm-12, bbs-8/ttc-8 and bbs-9 (By similarity). Interacts (via C-terminus) with bbs-5; the interaction is direct (PubMed:26150102).</text>
</comment>
<comment type="subcellular location">
    <subcellularLocation>
        <location evidence="1">Cytoplasm</location>
        <location evidence="1">Cytoskeleton</location>
        <location evidence="1">Microtubule organizing center</location>
        <location evidence="1">Centrosome</location>
    </subcellularLocation>
    <subcellularLocation>
        <location evidence="1">Cytoplasm</location>
        <location evidence="1">Cytoskeleton</location>
    </subcellularLocation>
    <subcellularLocation>
        <location evidence="1">Cell projection</location>
        <location evidence="1">Cilium membrane</location>
    </subcellularLocation>
</comment>
<comment type="alternative products">
    <event type="alternative splicing"/>
    <isoform>
        <id>Q5CZ52-1</id>
        <name>a</name>
        <sequence type="displayed"/>
    </isoform>
    <isoform>
        <id>Q5CZ52-2</id>
        <name>b</name>
        <sequence type="described" ref="VSP_044208"/>
    </isoform>
</comment>
<comment type="disruption phenotype">
    <text evidence="5">Single mutants do not display any obvious defects in ciliogenesis. Double bbs-4 and bbs-5 mutants display a defect in cilia structure and function. This is characterized by an increased accumulation and mislocalization of intraflagellar transport proteins and impaired movement of intraflagellar transport proteins along the ciliary axoneme. Double mutants also have defective polycystin-mediated cilia signaling and mislocalized and increased accumulation of mechanosensory receptors pkd-2, osm-9 and odr-10 within cilia.</text>
</comment>
<comment type="similarity">
    <text evidence="6">Belongs to the BBS4 family.</text>
</comment>
<dbReference type="EMBL" id="Z22179">
    <property type="protein sequence ID" value="CCD31085.1"/>
    <property type="molecule type" value="Genomic_DNA"/>
</dbReference>
<dbReference type="EMBL" id="Z22179">
    <property type="protein sequence ID" value="CCD31086.1"/>
    <property type="molecule type" value="Genomic_DNA"/>
</dbReference>
<dbReference type="RefSeq" id="NP_001255013.1">
    <molecule id="Q5CZ52-1"/>
    <property type="nucleotide sequence ID" value="NM_001268084.2"/>
</dbReference>
<dbReference type="RefSeq" id="NP_001255014.1">
    <molecule id="Q5CZ52-2"/>
    <property type="nucleotide sequence ID" value="NM_001268085.3"/>
</dbReference>
<dbReference type="SMR" id="Q5CZ52"/>
<dbReference type="BioGRID" id="532999">
    <property type="interactions" value="1"/>
</dbReference>
<dbReference type="ComplexPortal" id="CPX-428">
    <property type="entry name" value="BBSome complex"/>
</dbReference>
<dbReference type="FunCoup" id="Q5CZ52">
    <property type="interactions" value="1265"/>
</dbReference>
<dbReference type="STRING" id="6239.F58A4.14a.1"/>
<dbReference type="TCDB" id="3.A.33.1.2">
    <property type="family name" value="the bbsome complex (bbsome) family"/>
</dbReference>
<dbReference type="PaxDb" id="6239-F58A4.14a"/>
<dbReference type="EnsemblMetazoa" id="F58A4.14a.1">
    <molecule id="Q5CZ52-1"/>
    <property type="protein sequence ID" value="F58A4.14a.1"/>
    <property type="gene ID" value="WBGene00043992"/>
</dbReference>
<dbReference type="EnsemblMetazoa" id="F58A4.14b.1">
    <molecule id="Q5CZ52-2"/>
    <property type="protein sequence ID" value="F58A4.14b.1"/>
    <property type="gene ID" value="WBGene00043992"/>
</dbReference>
<dbReference type="GeneID" id="3565681"/>
<dbReference type="KEGG" id="cel:CELE_F58A4.14"/>
<dbReference type="UCSC" id="F58A4.14">
    <molecule id="Q5CZ52-1"/>
    <property type="organism name" value="c. elegans"/>
</dbReference>
<dbReference type="AGR" id="WB:WBGene00043992"/>
<dbReference type="CTD" id="3565681"/>
<dbReference type="WormBase" id="F58A4.14a">
    <molecule id="Q5CZ52-1"/>
    <property type="protein sequence ID" value="CE46408"/>
    <property type="gene ID" value="WBGene00043992"/>
    <property type="gene designation" value="bbs-4"/>
</dbReference>
<dbReference type="WormBase" id="F58A4.14b">
    <molecule id="Q5CZ52-2"/>
    <property type="protein sequence ID" value="CE46292"/>
    <property type="gene ID" value="WBGene00043992"/>
    <property type="gene designation" value="bbs-4"/>
</dbReference>
<dbReference type="eggNOG" id="KOG1124">
    <property type="taxonomic scope" value="Eukaryota"/>
</dbReference>
<dbReference type="HOGENOM" id="CLU_033477_0_0_1"/>
<dbReference type="InParanoid" id="Q5CZ52"/>
<dbReference type="OMA" id="YCEVAWH"/>
<dbReference type="OrthoDB" id="309339at2759"/>
<dbReference type="PhylomeDB" id="Q5CZ52"/>
<dbReference type="Reactome" id="R-CEL-5620922">
    <property type="pathway name" value="BBSome-mediated cargo-targeting to cilium"/>
</dbReference>
<dbReference type="PRO" id="PR:Q5CZ52"/>
<dbReference type="Proteomes" id="UP000001940">
    <property type="component" value="Chromosome III"/>
</dbReference>
<dbReference type="Bgee" id="WBGene00043992">
    <property type="expression patterns" value="Expressed in pharyngeal muscle cell (C elegans) and 3 other cell types or tissues"/>
</dbReference>
<dbReference type="GO" id="GO:0034464">
    <property type="term" value="C:BBSome"/>
    <property type="evidence" value="ECO:0000303"/>
    <property type="project" value="ComplexPortal"/>
</dbReference>
<dbReference type="GO" id="GO:0036064">
    <property type="term" value="C:ciliary basal body"/>
    <property type="evidence" value="ECO:0000314"/>
    <property type="project" value="MGI"/>
</dbReference>
<dbReference type="GO" id="GO:0060170">
    <property type="term" value="C:ciliary membrane"/>
    <property type="evidence" value="ECO:0007669"/>
    <property type="project" value="UniProtKB-SubCell"/>
</dbReference>
<dbReference type="GO" id="GO:0005929">
    <property type="term" value="C:cilium"/>
    <property type="evidence" value="ECO:0000303"/>
    <property type="project" value="ComplexPortal"/>
</dbReference>
<dbReference type="GO" id="GO:0005737">
    <property type="term" value="C:cytoplasm"/>
    <property type="evidence" value="ECO:0007669"/>
    <property type="project" value="UniProtKB-KW"/>
</dbReference>
<dbReference type="GO" id="GO:0000242">
    <property type="term" value="C:pericentriolar material"/>
    <property type="evidence" value="ECO:0000250"/>
    <property type="project" value="UniProtKB"/>
</dbReference>
<dbReference type="GO" id="GO:0030674">
    <property type="term" value="F:protein-macromolecule adaptor activity"/>
    <property type="evidence" value="ECO:0000250"/>
    <property type="project" value="UniProtKB"/>
</dbReference>
<dbReference type="GO" id="GO:0007098">
    <property type="term" value="P:centrosome cycle"/>
    <property type="evidence" value="ECO:0000250"/>
    <property type="project" value="UniProtKB"/>
</dbReference>
<dbReference type="GO" id="GO:0060271">
    <property type="term" value="P:cilium assembly"/>
    <property type="evidence" value="ECO:0000318"/>
    <property type="project" value="GO_Central"/>
</dbReference>
<dbReference type="GO" id="GO:0061512">
    <property type="term" value="P:protein localization to cilium"/>
    <property type="evidence" value="ECO:0000318"/>
    <property type="project" value="GO_Central"/>
</dbReference>
<dbReference type="GO" id="GO:0015031">
    <property type="term" value="P:protein transport"/>
    <property type="evidence" value="ECO:0007669"/>
    <property type="project" value="UniProtKB-KW"/>
</dbReference>
<dbReference type="Gene3D" id="1.25.40.10">
    <property type="entry name" value="Tetratricopeptide repeat domain"/>
    <property type="match status" value="3"/>
</dbReference>
<dbReference type="InterPro" id="IPR011990">
    <property type="entry name" value="TPR-like_helical_dom_sf"/>
</dbReference>
<dbReference type="InterPro" id="IPR019734">
    <property type="entry name" value="TPR_rpt"/>
</dbReference>
<dbReference type="PANTHER" id="PTHR44186">
    <property type="match status" value="1"/>
</dbReference>
<dbReference type="PANTHER" id="PTHR44186:SF1">
    <property type="entry name" value="BARDET-BIEDL SYNDROME 4 PROTEIN"/>
    <property type="match status" value="1"/>
</dbReference>
<dbReference type="Pfam" id="PF13414">
    <property type="entry name" value="TPR_11"/>
    <property type="match status" value="1"/>
</dbReference>
<dbReference type="Pfam" id="PF13181">
    <property type="entry name" value="TPR_8"/>
    <property type="match status" value="2"/>
</dbReference>
<dbReference type="SMART" id="SM00028">
    <property type="entry name" value="TPR"/>
    <property type="match status" value="7"/>
</dbReference>
<dbReference type="SUPFAM" id="SSF48452">
    <property type="entry name" value="TPR-like"/>
    <property type="match status" value="2"/>
</dbReference>
<dbReference type="PROSITE" id="PS50005">
    <property type="entry name" value="TPR"/>
    <property type="match status" value="6"/>
</dbReference>
<dbReference type="PROSITE" id="PS50293">
    <property type="entry name" value="TPR_REGION"/>
    <property type="match status" value="1"/>
</dbReference>
<keyword id="KW-0025">Alternative splicing</keyword>
<keyword id="KW-1003">Cell membrane</keyword>
<keyword id="KW-0966">Cell projection</keyword>
<keyword id="KW-0969">Cilium</keyword>
<keyword id="KW-0970">Cilium biogenesis/degradation</keyword>
<keyword id="KW-0963">Cytoplasm</keyword>
<keyword id="KW-0206">Cytoskeleton</keyword>
<keyword id="KW-0472">Membrane</keyword>
<keyword id="KW-0653">Protein transport</keyword>
<keyword id="KW-1185">Reference proteome</keyword>
<keyword id="KW-0677">Repeat</keyword>
<keyword id="KW-0802">TPR repeat</keyword>
<keyword id="KW-0813">Transport</keyword>
<gene>
    <name evidence="7" type="primary">bbs-4</name>
    <name evidence="7" type="ORF">F58A4.14</name>
</gene>
<organism>
    <name type="scientific">Caenorhabditis elegans</name>
    <dbReference type="NCBI Taxonomy" id="6239"/>
    <lineage>
        <taxon>Eukaryota</taxon>
        <taxon>Metazoa</taxon>
        <taxon>Ecdysozoa</taxon>
        <taxon>Nematoda</taxon>
        <taxon>Chromadorea</taxon>
        <taxon>Rhabditida</taxon>
        <taxon>Rhabditina</taxon>
        <taxon>Rhabditomorpha</taxon>
        <taxon>Rhabditoidea</taxon>
        <taxon>Rhabditidae</taxon>
        <taxon>Peloderinae</taxon>
        <taxon>Caenorhabditis</taxon>
    </lineage>
</organism>
<feature type="chain" id="PRO_0000284044" description="BBSome complex member bbs-4">
    <location>
        <begin position="1"/>
        <end position="462"/>
    </location>
</feature>
<feature type="repeat" description="TPR 1">
    <location>
        <begin position="89"/>
        <end position="122"/>
    </location>
</feature>
<feature type="repeat" description="TPR 2">
    <location>
        <begin position="124"/>
        <end position="156"/>
    </location>
</feature>
<feature type="repeat" description="TPR 3">
    <location>
        <begin position="199"/>
        <end position="232"/>
    </location>
</feature>
<feature type="repeat" description="TPR 4">
    <location>
        <begin position="234"/>
        <end position="266"/>
    </location>
</feature>
<feature type="repeat" description="TPR 5">
    <location>
        <begin position="268"/>
        <end position="300"/>
    </location>
</feature>
<feature type="repeat" description="TPR 6">
    <location>
        <begin position="335"/>
        <end position="368"/>
    </location>
</feature>
<feature type="repeat" description="TPR 7">
    <location>
        <begin position="369"/>
        <end position="402"/>
    </location>
</feature>
<feature type="region of interest" description="Disordered" evidence="3">
    <location>
        <begin position="1"/>
        <end position="46"/>
    </location>
</feature>
<feature type="splice variant" id="VSP_044208" description="In isoform b." evidence="6">
    <location>
        <begin position="1"/>
        <end position="152"/>
    </location>
</feature>
<feature type="mutagenesis site" description="No obvious phenotype." evidence="5">
    <original>E</original>
    <variation>Q</variation>
    <location>
        <position position="107"/>
    </location>
</feature>
<feature type="mutagenesis site" description="Abolishes interaction with bbs-5. Unable to target to cilia." evidence="5">
    <original>A</original>
    <variation>E</variation>
    <location>
        <position position="388"/>
    </location>
</feature>
<reference key="1">
    <citation type="journal article" date="1998" name="Science">
        <title>Genome sequence of the nematode C. elegans: a platform for investigating biology.</title>
        <authorList>
            <consortium name="The C. elegans sequencing consortium"/>
        </authorList>
    </citation>
    <scope>NUCLEOTIDE SEQUENCE [LARGE SCALE GENOMIC DNA]</scope>
    <scope>ALTERNATIVE SPLICING</scope>
    <source>
        <strain>Bristol N2</strain>
    </source>
</reference>
<reference key="2">
    <citation type="journal article" date="2012" name="Nat. Cell Biol.">
        <title>The BBSome controls IFT assembly and turnaround in cilia.</title>
        <authorList>
            <person name="Wei Q."/>
            <person name="Zhang Y."/>
            <person name="Li Y."/>
            <person name="Zhang Q."/>
            <person name="Ling K."/>
            <person name="Hu J."/>
        </authorList>
    </citation>
    <scope>FUNCTION</scope>
</reference>
<reference key="3">
    <citation type="journal article" date="2015" name="Sci. Rep.">
        <title>BBS4 and BBS5 show functional redundancy in the BBSome to regulate the degradative sorting of ciliary sensory receptors.</title>
        <authorList>
            <person name="Xu Q."/>
            <person name="Zhang Y."/>
            <person name="Wei Q."/>
            <person name="Huang Y."/>
            <person name="Li Y."/>
            <person name="Ling K."/>
            <person name="Hu J."/>
        </authorList>
    </citation>
    <scope>FUNCTION</scope>
    <scope>INTERACTION WITH BBS-5</scope>
    <scope>DISRUPTION PHENOTYPE</scope>
    <scope>MUTAGENESIS OF GLU-107 AND ALA-388</scope>
</reference>
<protein>
    <recommendedName>
        <fullName evidence="6">BBSome complex member bbs-4</fullName>
    </recommendedName>
    <alternativeName>
        <fullName>Bardet-Biedl syndrome 4 protein homolog</fullName>
    </alternativeName>
</protein>
<accession>Q5CZ52</accession>
<accession>G3MTX0</accession>
<accession>G3MTX1</accession>
<sequence length="462" mass="51511">MEASNQDEIIGTDVIPNEQDNPEEVVPEPTSLDVPPPPPERAPSAPKRVEILDCNSLNGLMYHYFAQGDYIECKSIIGEIQSKYLERNEAAFHVRGLIARNEGELEEAMECFHKAYELSGKNKRYFYETGRCNFLLGRHQIAVEQLTKASEVMKDNPKVWYWLARAIYHFPAEKVQGKTFNPVESARTILMKPDIAKDATLICFLGRLCEELGDTSGAIAAYKSSLKLQPDNTEVMNLLGLIYLRTGQVQEGFVQLGNCLAYDPANSQAILTIGSIMQNHSDHDVALNKYRVAADVSDYNGCLWNNIGIGLLARNKPAASHSALKKAAFINPLNYKISYNLGVLHDIMNLHCSALHYIKLCTELYPQNAKAVGAMAVILSHMNDDKNARLAYKKSIELKKNPSTILNYAIFEYRMKDVTAASNALKLYKDLQASGVKCSANNKETANLLESVLKQPDQSAEQ</sequence>
<proteinExistence type="evidence at protein level"/>